<proteinExistence type="inferred from homology"/>
<sequence>MEVRVFEGEFKGDGLSMAIVVARFNDLLTDELLSGAIDCFERHGVERVDVFKVPGSFEIPIIAKKLAESGKYDAILALGVVVRGETKHFDLVANEVSKGVAQAGLITGVPVIFGVIAVEDELQGLNRAGIKSNKGFEYAMAALEMANLMKKL</sequence>
<comment type="function">
    <text evidence="1">Catalyzes the formation of 6,7-dimethyl-8-ribityllumazine by condensation of 5-amino-6-(D-ribitylamino)uracil with 3,4-dihydroxy-2-butanone 4-phosphate. This is the penultimate step in the biosynthesis of riboflavin.</text>
</comment>
<comment type="catalytic activity">
    <reaction evidence="1">
        <text>(2S)-2-hydroxy-3-oxobutyl phosphate + 5-amino-6-(D-ribitylamino)uracil = 6,7-dimethyl-8-(1-D-ribityl)lumazine + phosphate + 2 H2O + H(+)</text>
        <dbReference type="Rhea" id="RHEA:26152"/>
        <dbReference type="ChEBI" id="CHEBI:15377"/>
        <dbReference type="ChEBI" id="CHEBI:15378"/>
        <dbReference type="ChEBI" id="CHEBI:15934"/>
        <dbReference type="ChEBI" id="CHEBI:43474"/>
        <dbReference type="ChEBI" id="CHEBI:58201"/>
        <dbReference type="ChEBI" id="CHEBI:58830"/>
        <dbReference type="EC" id="2.5.1.78"/>
    </reaction>
</comment>
<comment type="pathway">
    <text evidence="1">Cofactor biosynthesis; riboflavin biosynthesis; riboflavin from 2-hydroxy-3-oxobutyl phosphate and 5-amino-6-(D-ribitylamino)uracil: step 1/2.</text>
</comment>
<comment type="similarity">
    <text evidence="1">Belongs to the DMRL synthase family.</text>
</comment>
<protein>
    <recommendedName>
        <fullName evidence="1">6,7-dimethyl-8-ribityllumazine synthase</fullName>
        <shortName evidence="1">DMRL synthase</shortName>
        <shortName evidence="1">LS</shortName>
        <shortName evidence="1">Lumazine synthase</shortName>
        <ecNumber evidence="1">2.5.1.78</ecNumber>
    </recommendedName>
</protein>
<evidence type="ECO:0000255" key="1">
    <source>
        <dbReference type="HAMAP-Rule" id="MF_00178"/>
    </source>
</evidence>
<reference key="1">
    <citation type="journal article" date="2008" name="J. Bacteriol.">
        <title>The complete genome sequence of Thermococcus onnurineus NA1 reveals a mixed heterotrophic and carboxydotrophic metabolism.</title>
        <authorList>
            <person name="Lee H.S."/>
            <person name="Kang S.G."/>
            <person name="Bae S.S."/>
            <person name="Lim J.K."/>
            <person name="Cho Y."/>
            <person name="Kim Y.J."/>
            <person name="Jeon J.H."/>
            <person name="Cha S.-S."/>
            <person name="Kwon K.K."/>
            <person name="Kim H.-T."/>
            <person name="Park C.-J."/>
            <person name="Lee H.-W."/>
            <person name="Kim S.I."/>
            <person name="Chun J."/>
            <person name="Colwell R.R."/>
            <person name="Kim S.-J."/>
            <person name="Lee J.-H."/>
        </authorList>
    </citation>
    <scope>NUCLEOTIDE SEQUENCE [LARGE SCALE GENOMIC DNA]</scope>
    <source>
        <strain>NA1</strain>
    </source>
</reference>
<name>RISB_THEON</name>
<dbReference type="EC" id="2.5.1.78" evidence="1"/>
<dbReference type="EMBL" id="CP000855">
    <property type="protein sequence ID" value="ACJ16094.1"/>
    <property type="molecule type" value="Genomic_DNA"/>
</dbReference>
<dbReference type="RefSeq" id="WP_012571566.1">
    <property type="nucleotide sequence ID" value="NC_011529.1"/>
</dbReference>
<dbReference type="SMR" id="B6YUQ8"/>
<dbReference type="STRING" id="523850.TON_0607"/>
<dbReference type="GeneID" id="7016905"/>
<dbReference type="KEGG" id="ton:TON_0607"/>
<dbReference type="PATRIC" id="fig|523850.10.peg.608"/>
<dbReference type="eggNOG" id="arCOG01323">
    <property type="taxonomic scope" value="Archaea"/>
</dbReference>
<dbReference type="HOGENOM" id="CLU_089358_1_1_2"/>
<dbReference type="OrthoDB" id="7610at2157"/>
<dbReference type="UniPathway" id="UPA00275">
    <property type="reaction ID" value="UER00404"/>
</dbReference>
<dbReference type="Proteomes" id="UP000002727">
    <property type="component" value="Chromosome"/>
</dbReference>
<dbReference type="GO" id="GO:0009349">
    <property type="term" value="C:riboflavin synthase complex"/>
    <property type="evidence" value="ECO:0007669"/>
    <property type="project" value="InterPro"/>
</dbReference>
<dbReference type="GO" id="GO:0000906">
    <property type="term" value="F:6,7-dimethyl-8-ribityllumazine synthase activity"/>
    <property type="evidence" value="ECO:0007669"/>
    <property type="project" value="UniProtKB-UniRule"/>
</dbReference>
<dbReference type="GO" id="GO:0009231">
    <property type="term" value="P:riboflavin biosynthetic process"/>
    <property type="evidence" value="ECO:0007669"/>
    <property type="project" value="UniProtKB-UniRule"/>
</dbReference>
<dbReference type="CDD" id="cd09209">
    <property type="entry name" value="Lumazine_synthase-I"/>
    <property type="match status" value="1"/>
</dbReference>
<dbReference type="Gene3D" id="3.40.50.960">
    <property type="entry name" value="Lumazine/riboflavin synthase"/>
    <property type="match status" value="1"/>
</dbReference>
<dbReference type="HAMAP" id="MF_00178">
    <property type="entry name" value="Lumazine_synth"/>
    <property type="match status" value="1"/>
</dbReference>
<dbReference type="InterPro" id="IPR034964">
    <property type="entry name" value="LS"/>
</dbReference>
<dbReference type="InterPro" id="IPR002180">
    <property type="entry name" value="LS/RS"/>
</dbReference>
<dbReference type="InterPro" id="IPR036467">
    <property type="entry name" value="LS/RS_sf"/>
</dbReference>
<dbReference type="NCBIfam" id="TIGR00114">
    <property type="entry name" value="lumazine-synth"/>
    <property type="match status" value="1"/>
</dbReference>
<dbReference type="PANTHER" id="PTHR21058:SF0">
    <property type="entry name" value="6,7-DIMETHYL-8-RIBITYLLUMAZINE SYNTHASE"/>
    <property type="match status" value="1"/>
</dbReference>
<dbReference type="PANTHER" id="PTHR21058">
    <property type="entry name" value="6,7-DIMETHYL-8-RIBITYLLUMAZINE SYNTHASE DMRL SYNTHASE LUMAZINE SYNTHASE"/>
    <property type="match status" value="1"/>
</dbReference>
<dbReference type="Pfam" id="PF00885">
    <property type="entry name" value="DMRL_synthase"/>
    <property type="match status" value="1"/>
</dbReference>
<dbReference type="SUPFAM" id="SSF52121">
    <property type="entry name" value="Lumazine synthase"/>
    <property type="match status" value="1"/>
</dbReference>
<feature type="chain" id="PRO_1000098242" description="6,7-dimethyl-8-ribityllumazine synthase">
    <location>
        <begin position="1"/>
        <end position="152"/>
    </location>
</feature>
<feature type="active site" description="Proton donor" evidence="1">
    <location>
        <position position="88"/>
    </location>
</feature>
<feature type="binding site" evidence="1">
    <location>
        <position position="24"/>
    </location>
    <ligand>
        <name>5-amino-6-(D-ribitylamino)uracil</name>
        <dbReference type="ChEBI" id="CHEBI:15934"/>
    </ligand>
</feature>
<feature type="binding site" evidence="1">
    <location>
        <begin position="56"/>
        <end position="58"/>
    </location>
    <ligand>
        <name>5-amino-6-(D-ribitylamino)uracil</name>
        <dbReference type="ChEBI" id="CHEBI:15934"/>
    </ligand>
</feature>
<feature type="binding site" evidence="1">
    <location>
        <begin position="80"/>
        <end position="82"/>
    </location>
    <ligand>
        <name>5-amino-6-(D-ribitylamino)uracil</name>
        <dbReference type="ChEBI" id="CHEBI:15934"/>
    </ligand>
</feature>
<feature type="binding site" evidence="1">
    <location>
        <begin position="85"/>
        <end position="86"/>
    </location>
    <ligand>
        <name>(2S)-2-hydroxy-3-oxobutyl phosphate</name>
        <dbReference type="ChEBI" id="CHEBI:58830"/>
    </ligand>
</feature>
<feature type="binding site" evidence="1">
    <location>
        <position position="113"/>
    </location>
    <ligand>
        <name>5-amino-6-(D-ribitylamino)uracil</name>
        <dbReference type="ChEBI" id="CHEBI:15934"/>
    </ligand>
</feature>
<feature type="binding site" evidence="1">
    <location>
        <position position="127"/>
    </location>
    <ligand>
        <name>(2S)-2-hydroxy-3-oxobutyl phosphate</name>
        <dbReference type="ChEBI" id="CHEBI:58830"/>
    </ligand>
</feature>
<gene>
    <name evidence="1" type="primary">ribH</name>
    <name type="ordered locus">TON_0607</name>
</gene>
<organism>
    <name type="scientific">Thermococcus onnurineus (strain NA1)</name>
    <dbReference type="NCBI Taxonomy" id="523850"/>
    <lineage>
        <taxon>Archaea</taxon>
        <taxon>Methanobacteriati</taxon>
        <taxon>Methanobacteriota</taxon>
        <taxon>Thermococci</taxon>
        <taxon>Thermococcales</taxon>
        <taxon>Thermococcaceae</taxon>
        <taxon>Thermococcus</taxon>
    </lineage>
</organism>
<keyword id="KW-0686">Riboflavin biosynthesis</keyword>
<keyword id="KW-0808">Transferase</keyword>
<accession>B6YUQ8</accession>